<reference key="1">
    <citation type="journal article" date="2002" name="J. Virol.">
        <title>Comparison of the complete DNA sequences of the Oka varicella vaccine and its parental virus.</title>
        <authorList>
            <person name="Gomi Y."/>
            <person name="Sunamachi H."/>
            <person name="Mori Y."/>
            <person name="Nagaike K."/>
            <person name="Takahashi M."/>
            <person name="Yamanishi K."/>
        </authorList>
    </citation>
    <scope>NUCLEOTIDE SEQUENCE [LARGE SCALE GENOMIC DNA]</scope>
    <source>
        <strain>Isolate Human/Japan/P-Oka/1970</strain>
        <strain>Oka varicella vaccine Biken (V-Oka-Biken)</strain>
    </source>
</reference>
<reference key="2">
    <citation type="journal article" date="2008" name="J. Virol.">
        <title>Complete DNA sequences of two oka strain varicella-zoster virus genomes.</title>
        <authorList>
            <person name="Tillieux S.L."/>
            <person name="Halsey W.S."/>
            <person name="Thomas E.S."/>
            <person name="Voycik J.J."/>
            <person name="Sathe G.M."/>
            <person name="Vassilev V."/>
        </authorList>
    </citation>
    <scope>NUCLEOTIDE SEQUENCE [LARGE SCALE GENOMIC DNA]</scope>
    <source>
        <strain>Oka varicella vaccine VarilRix (V-Oka-GSK)</strain>
        <strain>Oka varicella vaccine Varivax (V-Oka-Merck)</strain>
    </source>
</reference>
<evidence type="ECO:0000250" key="1"/>
<evidence type="ECO:0000305" key="2"/>
<feature type="chain" id="PRO_0000385161" description="DNA polymerase catalytic subunit">
    <location>
        <begin position="1"/>
        <end position="1194"/>
    </location>
</feature>
<sequence>MAIRTGFCNPFLTQASGIKYNPRTGRGSNREFLHSYKTTMSSFQFLAPKCLDEDVPMEERKGVHVGTLSRPPKVYCNGKEVPILDFRCSSPWPRRVNIWGEIDFRGDKFDPRFNTFHVYDIVETTEAASNGDVSRFATATRPLGTVITLLGMSRCGKRVAVHVYGICQYFYINKAEVDTACGIRSCSELSVLLAECLRSSMITQNDATLNGDKNAFHGTSFKSASPESFRVEVIERTDVYYYDTQPCAFYRVYSPSSKFTNYLCDNFHPELKKYEGRVDATTRFLMDNPGFVSFGWYQLKPGVDGERVRVRPASRQLTLSDVEIDCMSDNLQAIPNDDSWPDYKLLCFDIECKSGGSNELAFPDATHLEDLVIQISCLLYSIPRQSLEHILLFSLGSCDLPQRYVQEMKDAGLPEPTVLEFDSEFELLIAFMTLVKQYAPEFATGYNIVNFDWAFIMEKLNSIYSLKLDGYGSINRGGLFKIWDVGKSGFQRRSKVKINGLISLDMYAIATEKLKLSSYKLDSVAREALNESKRDLPYKDIPGYYASGPNTRGIIGEYCIQDSALVGKLFFKYLPHLELSAVARLARITLTKAIYDGQQVRIYTCLLGLASSRGFILPDGGYPATFEYKDVIPDVGDVEEEMDEDESVSPTGTSSGRNVGYKGARVFDPDTGFYIDPVVVLDFASLYPSIIQAHNLCFTTLTLNFETVKRLNPSDYATFTVGGKRLFFVRSNVRESLLGVLLKDWLAMRKAIRARIPGSSSDEAVLLDKQQAAIKVVCNSVYGFTGVAQGFLPCLYVAATVTTIGRQMLLSTRDYIHNNWAAFERFITAFPDIESSVLSQKAYEVKVIYGDTDSVFIRFKGVGVEGIAKIGEKMAHIISTALFCPPIKLECEKTFIKLLLITKKKYIGVIYGGKVLMKGVDLVRKNNCQFINDYARKLVELLLYDDTVSRAAAEASCVSIAEWNRRAMPSGMAGFGRIIADAHRQITSPKLDINKFVMTAELSRPPSAYINRRLAHLTVYYKLVMRQGQIPNVRERIPYVIVAPTDEVEADAKSVALLRGDPLQNTAGKRCGEAKRKLIISDLAEDPIHVTSHGLSLNIDYYFSHLIGTASVTFKALFGNDTKLTERLLKRFIPETRVVNVKMLNRLQAAGFVCIHAPRWDNKMNTEAEITEEEQSHQIMRRVFCIPKAILHQS</sequence>
<organism>
    <name type="scientific">Varicella-zoster virus (strain Oka vaccine)</name>
    <name type="common">HHV-3</name>
    <name type="synonym">Human herpesvirus 3</name>
    <dbReference type="NCBI Taxonomy" id="341980"/>
    <lineage>
        <taxon>Viruses</taxon>
        <taxon>Duplodnaviria</taxon>
        <taxon>Heunggongvirae</taxon>
        <taxon>Peploviricota</taxon>
        <taxon>Herviviricetes</taxon>
        <taxon>Herpesvirales</taxon>
        <taxon>Orthoherpesviridae</taxon>
        <taxon>Alphaherpesvirinae</taxon>
        <taxon>Varicellovirus</taxon>
        <taxon>Varicellovirus humanalpha3</taxon>
        <taxon>Human herpesvirus 3</taxon>
    </lineage>
</organism>
<comment type="function">
    <text evidence="1">Replicates viral genomic DNA. The replication complex is composed of six viral proteins: the DNA polymerase, processivity factor, primase, primase-associated factor, helicase, and ssDNA-binding protein. Additionally, the polymerase contains an intrinsic ribonuclease H (RNase H) activity that specifically degrades RNA/DNA heteroduplexes or duplex DNA substrates in the 5' to 3' direction. Therefore, it can catalyze the excision of the RNA primers that initiate the synthesis of Okazaki fragments at a replication fork during viral DNA replication (By similarity).</text>
</comment>
<comment type="catalytic activity">
    <reaction>
        <text>DNA(n) + a 2'-deoxyribonucleoside 5'-triphosphate = DNA(n+1) + diphosphate</text>
        <dbReference type="Rhea" id="RHEA:22508"/>
        <dbReference type="Rhea" id="RHEA-COMP:17339"/>
        <dbReference type="Rhea" id="RHEA-COMP:17340"/>
        <dbReference type="ChEBI" id="CHEBI:33019"/>
        <dbReference type="ChEBI" id="CHEBI:61560"/>
        <dbReference type="ChEBI" id="CHEBI:173112"/>
        <dbReference type="EC" id="2.7.7.7"/>
    </reaction>
</comment>
<comment type="catalytic activity">
    <reaction>
        <text>Endonucleolytic cleavage to 5'-phosphomonoester.</text>
        <dbReference type="EC" id="3.1.26.4"/>
    </reaction>
</comment>
<comment type="subunit">
    <text evidence="1">Forms a complex with the ssDNA-binding protein, the DNA polymerase processivity factor, and the alkaline exonuclease. Interacts with the helicase-primase complex composed of the primase, the helicase and the primase-associated factor; this interaction may coordinate leading and lagging strand DNA synthesis at the replication fork (By similarity).</text>
</comment>
<comment type="subcellular location">
    <subcellularLocation>
        <location evidence="1">Host nucleus</location>
    </subcellularLocation>
    <text evidence="1">the protein is present at discrete sites in nuclei, called replication compartments where viral DNA replication occurs.</text>
</comment>
<comment type="similarity">
    <text evidence="2">Belongs to the DNA polymerase type-B family.</text>
</comment>
<keyword id="KW-0235">DNA replication</keyword>
<keyword id="KW-0238">DNA-binding</keyword>
<keyword id="KW-0239">DNA-directed DNA polymerase</keyword>
<keyword id="KW-0255">Endonuclease</keyword>
<keyword id="KW-1048">Host nucleus</keyword>
<keyword id="KW-0378">Hydrolase</keyword>
<keyword id="KW-0511">Multifunctional enzyme</keyword>
<keyword id="KW-0540">Nuclease</keyword>
<keyword id="KW-0548">Nucleotidyltransferase</keyword>
<keyword id="KW-0808">Transferase</keyword>
<keyword id="KW-1194">Viral DNA replication</keyword>
<protein>
    <recommendedName>
        <fullName>DNA polymerase catalytic subunit</fullName>
        <ecNumber>2.7.7.7</ecNumber>
        <ecNumber>3.1.26.4</ecNumber>
    </recommendedName>
</protein>
<accession>Q4JQU7</accession>
<name>DPOL_VZVO</name>
<gene>
    <name type="ORF">ORF28</name>
</gene>
<organismHost>
    <name type="scientific">Homo sapiens</name>
    <name type="common">Human</name>
    <dbReference type="NCBI Taxonomy" id="9606"/>
</organismHost>
<dbReference type="EC" id="2.7.7.7"/>
<dbReference type="EC" id="3.1.26.4"/>
<dbReference type="EMBL" id="AB097932">
    <property type="status" value="NOT_ANNOTATED_CDS"/>
    <property type="molecule type" value="Genomic_DNA"/>
</dbReference>
<dbReference type="EMBL" id="AB097933">
    <property type="status" value="NOT_ANNOTATED_CDS"/>
    <property type="molecule type" value="Genomic_DNA"/>
</dbReference>
<dbReference type="EMBL" id="DQ008354">
    <property type="protein sequence ID" value="AAY57642.1"/>
    <property type="molecule type" value="Genomic_DNA"/>
</dbReference>
<dbReference type="EMBL" id="DQ008355">
    <property type="protein sequence ID" value="AAY57713.1"/>
    <property type="molecule type" value="Genomic_DNA"/>
</dbReference>
<dbReference type="SMR" id="Q4JQU7"/>
<dbReference type="IntAct" id="Q4JQU7">
    <property type="interactions" value="10"/>
</dbReference>
<dbReference type="Proteomes" id="UP000002603">
    <property type="component" value="Genome"/>
</dbReference>
<dbReference type="Proteomes" id="UP000008504">
    <property type="component" value="Genome"/>
</dbReference>
<dbReference type="Proteomes" id="UP000008505">
    <property type="component" value="Genome"/>
</dbReference>
<dbReference type="Proteomes" id="UP000008506">
    <property type="component" value="Genome"/>
</dbReference>
<dbReference type="GO" id="GO:0042025">
    <property type="term" value="C:host cell nucleus"/>
    <property type="evidence" value="ECO:0007669"/>
    <property type="project" value="UniProtKB-SubCell"/>
</dbReference>
<dbReference type="GO" id="GO:0003677">
    <property type="term" value="F:DNA binding"/>
    <property type="evidence" value="ECO:0007669"/>
    <property type="project" value="UniProtKB-KW"/>
</dbReference>
<dbReference type="GO" id="GO:0003887">
    <property type="term" value="F:DNA-directed DNA polymerase activity"/>
    <property type="evidence" value="ECO:0007669"/>
    <property type="project" value="UniProtKB-KW"/>
</dbReference>
<dbReference type="GO" id="GO:0000166">
    <property type="term" value="F:nucleotide binding"/>
    <property type="evidence" value="ECO:0007669"/>
    <property type="project" value="InterPro"/>
</dbReference>
<dbReference type="GO" id="GO:0004523">
    <property type="term" value="F:RNA-DNA hybrid ribonuclease activity"/>
    <property type="evidence" value="ECO:0007669"/>
    <property type="project" value="UniProtKB-EC"/>
</dbReference>
<dbReference type="GO" id="GO:0006261">
    <property type="term" value="P:DNA-templated DNA replication"/>
    <property type="evidence" value="ECO:0007669"/>
    <property type="project" value="TreeGrafter"/>
</dbReference>
<dbReference type="GO" id="GO:0039693">
    <property type="term" value="P:viral DNA genome replication"/>
    <property type="evidence" value="ECO:0007669"/>
    <property type="project" value="UniProtKB-KW"/>
</dbReference>
<dbReference type="FunFam" id="1.10.132.60:FF:000011">
    <property type="entry name" value="DNA polymerase catalytic subunit"/>
    <property type="match status" value="1"/>
</dbReference>
<dbReference type="Gene3D" id="1.10.132.60">
    <property type="entry name" value="DNA polymerase family B, C-terminal domain"/>
    <property type="match status" value="1"/>
</dbReference>
<dbReference type="Gene3D" id="3.30.342.10">
    <property type="entry name" value="DNA Polymerase, chain B, domain 1"/>
    <property type="match status" value="1"/>
</dbReference>
<dbReference type="Gene3D" id="1.10.287.690">
    <property type="entry name" value="Helix hairpin bin"/>
    <property type="match status" value="1"/>
</dbReference>
<dbReference type="Gene3D" id="3.90.1600.10">
    <property type="entry name" value="Palm domain of DNA polymerase"/>
    <property type="match status" value="1"/>
</dbReference>
<dbReference type="Gene3D" id="3.30.420.10">
    <property type="entry name" value="Ribonuclease H-like superfamily/Ribonuclease H"/>
    <property type="match status" value="1"/>
</dbReference>
<dbReference type="InterPro" id="IPR006172">
    <property type="entry name" value="DNA-dir_DNA_pol_B"/>
</dbReference>
<dbReference type="InterPro" id="IPR017964">
    <property type="entry name" value="DNA-dir_DNA_pol_B_CS"/>
</dbReference>
<dbReference type="InterPro" id="IPR006133">
    <property type="entry name" value="DNA-dir_DNA_pol_B_exonuc"/>
</dbReference>
<dbReference type="InterPro" id="IPR006134">
    <property type="entry name" value="DNA-dir_DNA_pol_B_multi_dom"/>
</dbReference>
<dbReference type="InterPro" id="IPR043502">
    <property type="entry name" value="DNA/RNA_pol_sf"/>
</dbReference>
<dbReference type="InterPro" id="IPR042087">
    <property type="entry name" value="DNA_pol_B_thumb"/>
</dbReference>
<dbReference type="InterPro" id="IPR023211">
    <property type="entry name" value="DNA_pol_palm_dom_sf"/>
</dbReference>
<dbReference type="InterPro" id="IPR050240">
    <property type="entry name" value="DNA_pol_type-B"/>
</dbReference>
<dbReference type="InterPro" id="IPR012337">
    <property type="entry name" value="RNaseH-like_sf"/>
</dbReference>
<dbReference type="InterPro" id="IPR036397">
    <property type="entry name" value="RNaseH_sf"/>
</dbReference>
<dbReference type="PANTHER" id="PTHR10322">
    <property type="entry name" value="DNA POLYMERASE CATALYTIC SUBUNIT"/>
    <property type="match status" value="1"/>
</dbReference>
<dbReference type="PANTHER" id="PTHR10322:SF23">
    <property type="entry name" value="DNA POLYMERASE DELTA CATALYTIC SUBUNIT"/>
    <property type="match status" value="1"/>
</dbReference>
<dbReference type="Pfam" id="PF00136">
    <property type="entry name" value="DNA_pol_B"/>
    <property type="match status" value="1"/>
</dbReference>
<dbReference type="Pfam" id="PF03104">
    <property type="entry name" value="DNA_pol_B_exo1"/>
    <property type="match status" value="1"/>
</dbReference>
<dbReference type="PRINTS" id="PR00106">
    <property type="entry name" value="DNAPOLB"/>
</dbReference>
<dbReference type="SMART" id="SM00486">
    <property type="entry name" value="POLBc"/>
    <property type="match status" value="1"/>
</dbReference>
<dbReference type="SUPFAM" id="SSF56672">
    <property type="entry name" value="DNA/RNA polymerases"/>
    <property type="match status" value="1"/>
</dbReference>
<dbReference type="SUPFAM" id="SSF53098">
    <property type="entry name" value="Ribonuclease H-like"/>
    <property type="match status" value="1"/>
</dbReference>
<dbReference type="PROSITE" id="PS00116">
    <property type="entry name" value="DNA_POLYMERASE_B"/>
    <property type="match status" value="1"/>
</dbReference>
<proteinExistence type="inferred from homology"/>